<keyword id="KW-1185">Reference proteome</keyword>
<keyword id="KW-0687">Ribonucleoprotein</keyword>
<keyword id="KW-0689">Ribosomal protein</keyword>
<feature type="chain" id="PRO_0000146543" description="Small ribosomal subunit protein uS10">
    <location>
        <begin position="1"/>
        <end position="102"/>
    </location>
</feature>
<comment type="function">
    <text evidence="1">Involved in the binding of tRNA to the ribosomes.</text>
</comment>
<comment type="subunit">
    <text evidence="1">Part of the 30S ribosomal subunit.</text>
</comment>
<comment type="similarity">
    <text evidence="1">Belongs to the universal ribosomal protein uS10 family.</text>
</comment>
<evidence type="ECO:0000255" key="1">
    <source>
        <dbReference type="HAMAP-Rule" id="MF_00508"/>
    </source>
</evidence>
<evidence type="ECO:0000305" key="2"/>
<gene>
    <name evidence="1" type="primary">rpsJ</name>
    <name type="ordered locus">lp_1032</name>
</gene>
<accession>Q88XY7</accession>
<accession>F9UMK4</accession>
<reference key="1">
    <citation type="journal article" date="2003" name="Proc. Natl. Acad. Sci. U.S.A.">
        <title>Complete genome sequence of Lactobacillus plantarum WCFS1.</title>
        <authorList>
            <person name="Kleerebezem M."/>
            <person name="Boekhorst J."/>
            <person name="van Kranenburg R."/>
            <person name="Molenaar D."/>
            <person name="Kuipers O.P."/>
            <person name="Leer R."/>
            <person name="Tarchini R."/>
            <person name="Peters S.A."/>
            <person name="Sandbrink H.M."/>
            <person name="Fiers M.W.E.J."/>
            <person name="Stiekema W."/>
            <person name="Klein Lankhorst R.M."/>
            <person name="Bron P.A."/>
            <person name="Hoffer S.M."/>
            <person name="Nierop Groot M.N."/>
            <person name="Kerkhoven R."/>
            <person name="De Vries M."/>
            <person name="Ursing B."/>
            <person name="De Vos W.M."/>
            <person name="Siezen R.J."/>
        </authorList>
    </citation>
    <scope>NUCLEOTIDE SEQUENCE [LARGE SCALE GENOMIC DNA]</scope>
    <source>
        <strain>ATCC BAA-793 / NCIMB 8826 / WCFS1</strain>
    </source>
</reference>
<reference key="2">
    <citation type="journal article" date="2012" name="J. Bacteriol.">
        <title>Complete resequencing and reannotation of the Lactobacillus plantarum WCFS1 genome.</title>
        <authorList>
            <person name="Siezen R.J."/>
            <person name="Francke C."/>
            <person name="Renckens B."/>
            <person name="Boekhorst J."/>
            <person name="Wels M."/>
            <person name="Kleerebezem M."/>
            <person name="van Hijum S.A."/>
        </authorList>
    </citation>
    <scope>NUCLEOTIDE SEQUENCE [LARGE SCALE GENOMIC DNA]</scope>
    <scope>GENOME REANNOTATION</scope>
    <source>
        <strain>ATCC BAA-793 / NCIMB 8826 / WCFS1</strain>
    </source>
</reference>
<proteinExistence type="inferred from homology"/>
<protein>
    <recommendedName>
        <fullName evidence="1">Small ribosomal subunit protein uS10</fullName>
    </recommendedName>
    <alternativeName>
        <fullName evidence="2">30S ribosomal protein S10</fullName>
    </alternativeName>
</protein>
<name>RS10_LACPL</name>
<sequence length="102" mass="11736">MAKQKIRIRLKAYEHRILDQSADKIVETAKRTGATISGPIPLPTERTIYTVLRSPHKFKDSREQFEMRTHKRLIDIVNPTPKTVDSLMKLDLPSGVDIEIKL</sequence>
<dbReference type="EMBL" id="AL935263">
    <property type="protein sequence ID" value="CCC78443.1"/>
    <property type="molecule type" value="Genomic_DNA"/>
</dbReference>
<dbReference type="RefSeq" id="WP_003638059.1">
    <property type="nucleotide sequence ID" value="NC_004567.2"/>
</dbReference>
<dbReference type="RefSeq" id="YP_004888957.1">
    <property type="nucleotide sequence ID" value="NC_004567.2"/>
</dbReference>
<dbReference type="SMR" id="Q88XY7"/>
<dbReference type="STRING" id="220668.lp_1032"/>
<dbReference type="EnsemblBacteria" id="CCC78443">
    <property type="protein sequence ID" value="CCC78443"/>
    <property type="gene ID" value="lp_1032"/>
</dbReference>
<dbReference type="GeneID" id="97414321"/>
<dbReference type="KEGG" id="lpl:lp_1032"/>
<dbReference type="PATRIC" id="fig|220668.9.peg.870"/>
<dbReference type="eggNOG" id="COG0051">
    <property type="taxonomic scope" value="Bacteria"/>
</dbReference>
<dbReference type="HOGENOM" id="CLU_122625_1_3_9"/>
<dbReference type="OrthoDB" id="9804464at2"/>
<dbReference type="PhylomeDB" id="Q88XY7"/>
<dbReference type="Proteomes" id="UP000000432">
    <property type="component" value="Chromosome"/>
</dbReference>
<dbReference type="GO" id="GO:1990904">
    <property type="term" value="C:ribonucleoprotein complex"/>
    <property type="evidence" value="ECO:0007669"/>
    <property type="project" value="UniProtKB-KW"/>
</dbReference>
<dbReference type="GO" id="GO:0005840">
    <property type="term" value="C:ribosome"/>
    <property type="evidence" value="ECO:0007669"/>
    <property type="project" value="UniProtKB-KW"/>
</dbReference>
<dbReference type="GO" id="GO:0003735">
    <property type="term" value="F:structural constituent of ribosome"/>
    <property type="evidence" value="ECO:0007669"/>
    <property type="project" value="InterPro"/>
</dbReference>
<dbReference type="GO" id="GO:0000049">
    <property type="term" value="F:tRNA binding"/>
    <property type="evidence" value="ECO:0007669"/>
    <property type="project" value="UniProtKB-UniRule"/>
</dbReference>
<dbReference type="GO" id="GO:0006412">
    <property type="term" value="P:translation"/>
    <property type="evidence" value="ECO:0007669"/>
    <property type="project" value="UniProtKB-UniRule"/>
</dbReference>
<dbReference type="FunFam" id="3.30.70.600:FF:000001">
    <property type="entry name" value="30S ribosomal protein S10"/>
    <property type="match status" value="1"/>
</dbReference>
<dbReference type="Gene3D" id="3.30.70.600">
    <property type="entry name" value="Ribosomal protein S10 domain"/>
    <property type="match status" value="1"/>
</dbReference>
<dbReference type="HAMAP" id="MF_00508">
    <property type="entry name" value="Ribosomal_uS10"/>
    <property type="match status" value="1"/>
</dbReference>
<dbReference type="InterPro" id="IPR001848">
    <property type="entry name" value="Ribosomal_uS10"/>
</dbReference>
<dbReference type="InterPro" id="IPR018268">
    <property type="entry name" value="Ribosomal_uS10_CS"/>
</dbReference>
<dbReference type="InterPro" id="IPR027486">
    <property type="entry name" value="Ribosomal_uS10_dom"/>
</dbReference>
<dbReference type="InterPro" id="IPR036838">
    <property type="entry name" value="Ribosomal_uS10_dom_sf"/>
</dbReference>
<dbReference type="NCBIfam" id="NF001861">
    <property type="entry name" value="PRK00596.1"/>
    <property type="match status" value="1"/>
</dbReference>
<dbReference type="NCBIfam" id="TIGR01049">
    <property type="entry name" value="rpsJ_bact"/>
    <property type="match status" value="1"/>
</dbReference>
<dbReference type="PANTHER" id="PTHR11700">
    <property type="entry name" value="30S RIBOSOMAL PROTEIN S10 FAMILY MEMBER"/>
    <property type="match status" value="1"/>
</dbReference>
<dbReference type="Pfam" id="PF00338">
    <property type="entry name" value="Ribosomal_S10"/>
    <property type="match status" value="1"/>
</dbReference>
<dbReference type="PRINTS" id="PR00971">
    <property type="entry name" value="RIBOSOMALS10"/>
</dbReference>
<dbReference type="SMART" id="SM01403">
    <property type="entry name" value="Ribosomal_S10"/>
    <property type="match status" value="1"/>
</dbReference>
<dbReference type="SUPFAM" id="SSF54999">
    <property type="entry name" value="Ribosomal protein S10"/>
    <property type="match status" value="1"/>
</dbReference>
<dbReference type="PROSITE" id="PS00361">
    <property type="entry name" value="RIBOSOMAL_S10"/>
    <property type="match status" value="1"/>
</dbReference>
<organism>
    <name type="scientific">Lactiplantibacillus plantarum (strain ATCC BAA-793 / NCIMB 8826 / WCFS1)</name>
    <name type="common">Lactobacillus plantarum</name>
    <dbReference type="NCBI Taxonomy" id="220668"/>
    <lineage>
        <taxon>Bacteria</taxon>
        <taxon>Bacillati</taxon>
        <taxon>Bacillota</taxon>
        <taxon>Bacilli</taxon>
        <taxon>Lactobacillales</taxon>
        <taxon>Lactobacillaceae</taxon>
        <taxon>Lactiplantibacillus</taxon>
    </lineage>
</organism>